<keyword id="KW-0030">Aminoacyl-tRNA synthetase</keyword>
<keyword id="KW-0067">ATP-binding</keyword>
<keyword id="KW-0963">Cytoplasm</keyword>
<keyword id="KW-0436">Ligase</keyword>
<keyword id="KW-0479">Metal-binding</keyword>
<keyword id="KW-0547">Nucleotide-binding</keyword>
<keyword id="KW-0648">Protein biosynthesis</keyword>
<keyword id="KW-1185">Reference proteome</keyword>
<keyword id="KW-0694">RNA-binding</keyword>
<keyword id="KW-0820">tRNA-binding</keyword>
<keyword id="KW-0862">Zinc</keyword>
<accession>Q55806</accession>
<reference key="1">
    <citation type="journal article" date="1995" name="DNA Res.">
        <title>Sequence analysis of the genome of the unicellular cyanobacterium Synechocystis sp. strain PCC6803. I. Sequence features in the 1 Mb region from map positions 64% to 92% of the genome.</title>
        <authorList>
            <person name="Kaneko T."/>
            <person name="Tanaka A."/>
            <person name="Sato S."/>
            <person name="Kotani H."/>
            <person name="Sazuka T."/>
            <person name="Miyajima N."/>
            <person name="Sugiura M."/>
            <person name="Tabata S."/>
        </authorList>
    </citation>
    <scope>NUCLEOTIDE SEQUENCE [LARGE SCALE GENOMIC DNA]</scope>
    <source>
        <strain>ATCC 27184 / PCC 6803 / N-1</strain>
    </source>
</reference>
<reference key="2">
    <citation type="journal article" date="1996" name="DNA Res.">
        <title>Sequence analysis of the genome of the unicellular cyanobacterium Synechocystis sp. strain PCC6803. II. Sequence determination of the entire genome and assignment of potential protein-coding regions.</title>
        <authorList>
            <person name="Kaneko T."/>
            <person name="Sato S."/>
            <person name="Kotani H."/>
            <person name="Tanaka A."/>
            <person name="Asamizu E."/>
            <person name="Nakamura Y."/>
            <person name="Miyajima N."/>
            <person name="Hirosawa M."/>
            <person name="Sugiura M."/>
            <person name="Sasamoto S."/>
            <person name="Kimura T."/>
            <person name="Hosouchi T."/>
            <person name="Matsuno A."/>
            <person name="Muraki A."/>
            <person name="Nakazaki N."/>
            <person name="Naruo K."/>
            <person name="Okumura S."/>
            <person name="Shimpo S."/>
            <person name="Takeuchi C."/>
            <person name="Wada T."/>
            <person name="Watanabe A."/>
            <person name="Yamada M."/>
            <person name="Yasuda M."/>
            <person name="Tabata S."/>
        </authorList>
    </citation>
    <scope>NUCLEOTIDE SEQUENCE [LARGE SCALE GENOMIC DNA]</scope>
    <source>
        <strain>ATCC 27184 / PCC 6803 / Kazusa</strain>
    </source>
</reference>
<sequence length="603" mass="68873">MAKTVVSPDTIALPRTSESEQLKKIRHTTSHVMAMAVQKLFPKAQVTIGPWTETGFYYDFDVAEPFTEADLKAIKKEMVKIINKKLPVIREEISREEAKQRIESIQEPYKLEILDSIHEPITVYHLGDQWWDLCAGPHLESTADINPKAIALESVAGAYWRGDANKAQLQRIYGTAWETPEQLAEYQRRKEEALKRDHRKLGKELGLFIFADPVGPGLPLWTPKGTIIRTILEDFLKQEQIKRGYLPVVTPHIARVDLFKQSGHWQKYQEDMFPMMAESPEEAAQEMGFVLKPMNCPFHIQIYKSELRSYRDLPLRLAEFGTVYRYEQSGELGGLTRVRGFTVDDSHLFVTPDQLDEEFLSVVDLILTVFKSLQLKNFKARLSFRDPESDKYIGSDEAWEKAQGAIRRAVQELEMDYFEAPGEAAFYGPKLDFIFQDALEREWQLGTVQVDYNLPERFDLEYIAADGSRQRPVMIHRAPFGSLERLIGILIEEYAGDFPLWLAPIQVRLLAVSDEFLPFAQSIVQQMQSLGLRAEVDTSGDRLGKMIRNAEKQKIPVMAVIGAKEVEANALNIRTRASGELGEIPVTEVLEKLQATVTNHDTW</sequence>
<comment type="function">
    <text evidence="1">Catalyzes the attachment of threonine to tRNA(Thr) in a two-step reaction: L-threonine is first activated by ATP to form Thr-AMP and then transferred to the acceptor end of tRNA(Thr). Also edits incorrectly charged L-seryl-tRNA(Thr).</text>
</comment>
<comment type="catalytic activity">
    <reaction evidence="1">
        <text>tRNA(Thr) + L-threonine + ATP = L-threonyl-tRNA(Thr) + AMP + diphosphate + H(+)</text>
        <dbReference type="Rhea" id="RHEA:24624"/>
        <dbReference type="Rhea" id="RHEA-COMP:9670"/>
        <dbReference type="Rhea" id="RHEA-COMP:9704"/>
        <dbReference type="ChEBI" id="CHEBI:15378"/>
        <dbReference type="ChEBI" id="CHEBI:30616"/>
        <dbReference type="ChEBI" id="CHEBI:33019"/>
        <dbReference type="ChEBI" id="CHEBI:57926"/>
        <dbReference type="ChEBI" id="CHEBI:78442"/>
        <dbReference type="ChEBI" id="CHEBI:78534"/>
        <dbReference type="ChEBI" id="CHEBI:456215"/>
        <dbReference type="EC" id="6.1.1.3"/>
    </reaction>
</comment>
<comment type="cofactor">
    <cofactor evidence="1">
        <name>Zn(2+)</name>
        <dbReference type="ChEBI" id="CHEBI:29105"/>
    </cofactor>
    <text evidence="1">Binds 1 zinc ion per subunit.</text>
</comment>
<comment type="subunit">
    <text evidence="1">Homodimer.</text>
</comment>
<comment type="subcellular location">
    <subcellularLocation>
        <location evidence="1">Cytoplasm</location>
    </subcellularLocation>
</comment>
<comment type="similarity">
    <text evidence="1">Belongs to the class-II aminoacyl-tRNA synthetase family.</text>
</comment>
<proteinExistence type="inferred from homology"/>
<name>SYT_SYNY3</name>
<evidence type="ECO:0000255" key="1">
    <source>
        <dbReference type="HAMAP-Rule" id="MF_00184"/>
    </source>
</evidence>
<dbReference type="EC" id="6.1.1.3" evidence="1"/>
<dbReference type="EMBL" id="BA000022">
    <property type="protein sequence ID" value="BAA10559.1"/>
    <property type="molecule type" value="Genomic_DNA"/>
</dbReference>
<dbReference type="PIR" id="S76615">
    <property type="entry name" value="S76615"/>
</dbReference>
<dbReference type="SMR" id="Q55806"/>
<dbReference type="FunCoup" id="Q55806">
    <property type="interactions" value="503"/>
</dbReference>
<dbReference type="STRING" id="1148.gene:10500063"/>
<dbReference type="PaxDb" id="1148-1001722"/>
<dbReference type="EnsemblBacteria" id="BAA10559">
    <property type="protein sequence ID" value="BAA10559"/>
    <property type="gene ID" value="BAA10559"/>
</dbReference>
<dbReference type="KEGG" id="syn:sll0078"/>
<dbReference type="eggNOG" id="COG0441">
    <property type="taxonomic scope" value="Bacteria"/>
</dbReference>
<dbReference type="InParanoid" id="Q55806"/>
<dbReference type="PhylomeDB" id="Q55806"/>
<dbReference type="Proteomes" id="UP000001425">
    <property type="component" value="Chromosome"/>
</dbReference>
<dbReference type="GO" id="GO:0005737">
    <property type="term" value="C:cytoplasm"/>
    <property type="evidence" value="ECO:0007669"/>
    <property type="project" value="UniProtKB-SubCell"/>
</dbReference>
<dbReference type="GO" id="GO:0005524">
    <property type="term" value="F:ATP binding"/>
    <property type="evidence" value="ECO:0007669"/>
    <property type="project" value="UniProtKB-UniRule"/>
</dbReference>
<dbReference type="GO" id="GO:0046872">
    <property type="term" value="F:metal ion binding"/>
    <property type="evidence" value="ECO:0007669"/>
    <property type="project" value="UniProtKB-KW"/>
</dbReference>
<dbReference type="GO" id="GO:0004829">
    <property type="term" value="F:threonine-tRNA ligase activity"/>
    <property type="evidence" value="ECO:0000318"/>
    <property type="project" value="GO_Central"/>
</dbReference>
<dbReference type="GO" id="GO:0000049">
    <property type="term" value="F:tRNA binding"/>
    <property type="evidence" value="ECO:0007669"/>
    <property type="project" value="UniProtKB-KW"/>
</dbReference>
<dbReference type="GO" id="GO:0006435">
    <property type="term" value="P:threonyl-tRNA aminoacylation"/>
    <property type="evidence" value="ECO:0000318"/>
    <property type="project" value="GO_Central"/>
</dbReference>
<dbReference type="CDD" id="cd00860">
    <property type="entry name" value="ThrRS_anticodon"/>
    <property type="match status" value="1"/>
</dbReference>
<dbReference type="CDD" id="cd00771">
    <property type="entry name" value="ThrRS_core"/>
    <property type="match status" value="1"/>
</dbReference>
<dbReference type="FunFam" id="3.30.54.20:FF:000002">
    <property type="entry name" value="Threonine--tRNA ligase"/>
    <property type="match status" value="1"/>
</dbReference>
<dbReference type="FunFam" id="3.30.930.10:FF:000002">
    <property type="entry name" value="Threonine--tRNA ligase"/>
    <property type="match status" value="1"/>
</dbReference>
<dbReference type="FunFam" id="3.40.50.800:FF:000001">
    <property type="entry name" value="Threonine--tRNA ligase"/>
    <property type="match status" value="1"/>
</dbReference>
<dbReference type="Gene3D" id="3.30.54.20">
    <property type="match status" value="1"/>
</dbReference>
<dbReference type="Gene3D" id="3.40.50.800">
    <property type="entry name" value="Anticodon-binding domain"/>
    <property type="match status" value="1"/>
</dbReference>
<dbReference type="Gene3D" id="3.30.930.10">
    <property type="entry name" value="Bira Bifunctional Protein, Domain 2"/>
    <property type="match status" value="1"/>
</dbReference>
<dbReference type="Gene3D" id="3.30.980.10">
    <property type="entry name" value="Threonyl-trna Synthetase, Chain A, domain 2"/>
    <property type="match status" value="1"/>
</dbReference>
<dbReference type="HAMAP" id="MF_00184">
    <property type="entry name" value="Thr_tRNA_synth"/>
    <property type="match status" value="1"/>
</dbReference>
<dbReference type="InterPro" id="IPR002314">
    <property type="entry name" value="aa-tRNA-synt_IIb"/>
</dbReference>
<dbReference type="InterPro" id="IPR006195">
    <property type="entry name" value="aa-tRNA-synth_II"/>
</dbReference>
<dbReference type="InterPro" id="IPR045864">
    <property type="entry name" value="aa-tRNA-synth_II/BPL/LPL"/>
</dbReference>
<dbReference type="InterPro" id="IPR004154">
    <property type="entry name" value="Anticodon-bd"/>
</dbReference>
<dbReference type="InterPro" id="IPR036621">
    <property type="entry name" value="Anticodon-bd_dom_sf"/>
</dbReference>
<dbReference type="InterPro" id="IPR002320">
    <property type="entry name" value="Thr-tRNA-ligase_IIa"/>
</dbReference>
<dbReference type="InterPro" id="IPR018163">
    <property type="entry name" value="Thr/Ala-tRNA-synth_IIc_edit"/>
</dbReference>
<dbReference type="InterPro" id="IPR047246">
    <property type="entry name" value="ThrRS_anticodon"/>
</dbReference>
<dbReference type="InterPro" id="IPR033728">
    <property type="entry name" value="ThrRS_core"/>
</dbReference>
<dbReference type="InterPro" id="IPR012947">
    <property type="entry name" value="tRNA_SAD"/>
</dbReference>
<dbReference type="NCBIfam" id="TIGR00418">
    <property type="entry name" value="thrS"/>
    <property type="match status" value="1"/>
</dbReference>
<dbReference type="PANTHER" id="PTHR11451:SF44">
    <property type="entry name" value="THREONINE--TRNA LIGASE, CHLOROPLASTIC_MITOCHONDRIAL 2"/>
    <property type="match status" value="1"/>
</dbReference>
<dbReference type="PANTHER" id="PTHR11451">
    <property type="entry name" value="THREONINE-TRNA LIGASE"/>
    <property type="match status" value="1"/>
</dbReference>
<dbReference type="Pfam" id="PF03129">
    <property type="entry name" value="HGTP_anticodon"/>
    <property type="match status" value="1"/>
</dbReference>
<dbReference type="Pfam" id="PF00587">
    <property type="entry name" value="tRNA-synt_2b"/>
    <property type="match status" value="1"/>
</dbReference>
<dbReference type="Pfam" id="PF07973">
    <property type="entry name" value="tRNA_SAD"/>
    <property type="match status" value="1"/>
</dbReference>
<dbReference type="PRINTS" id="PR01047">
    <property type="entry name" value="TRNASYNTHTHR"/>
</dbReference>
<dbReference type="SMART" id="SM00863">
    <property type="entry name" value="tRNA_SAD"/>
    <property type="match status" value="1"/>
</dbReference>
<dbReference type="SUPFAM" id="SSF52954">
    <property type="entry name" value="Class II aaRS ABD-related"/>
    <property type="match status" value="1"/>
</dbReference>
<dbReference type="SUPFAM" id="SSF55681">
    <property type="entry name" value="Class II aaRS and biotin synthetases"/>
    <property type="match status" value="1"/>
</dbReference>
<dbReference type="SUPFAM" id="SSF55186">
    <property type="entry name" value="ThrRS/AlaRS common domain"/>
    <property type="match status" value="1"/>
</dbReference>
<dbReference type="PROSITE" id="PS50862">
    <property type="entry name" value="AA_TRNA_LIGASE_II"/>
    <property type="match status" value="1"/>
</dbReference>
<protein>
    <recommendedName>
        <fullName evidence="1">Threonine--tRNA ligase</fullName>
        <ecNumber evidence="1">6.1.1.3</ecNumber>
    </recommendedName>
    <alternativeName>
        <fullName evidence="1">Threonyl-tRNA synthetase</fullName>
        <shortName evidence="1">ThrRS</shortName>
    </alternativeName>
</protein>
<gene>
    <name evidence="1" type="primary">thrS</name>
    <name type="ordered locus">sll0078</name>
</gene>
<feature type="chain" id="PRO_0000101072" description="Threonine--tRNA ligase">
    <location>
        <begin position="1"/>
        <end position="603"/>
    </location>
</feature>
<feature type="region of interest" description="Catalytic" evidence="1">
    <location>
        <begin position="197"/>
        <end position="499"/>
    </location>
</feature>
<feature type="binding site" evidence="1">
    <location>
        <position position="296"/>
    </location>
    <ligand>
        <name>Zn(2+)</name>
        <dbReference type="ChEBI" id="CHEBI:29105"/>
    </ligand>
</feature>
<feature type="binding site" evidence="1">
    <location>
        <position position="347"/>
    </location>
    <ligand>
        <name>Zn(2+)</name>
        <dbReference type="ChEBI" id="CHEBI:29105"/>
    </ligand>
</feature>
<feature type="binding site" evidence="1">
    <location>
        <position position="476"/>
    </location>
    <ligand>
        <name>Zn(2+)</name>
        <dbReference type="ChEBI" id="CHEBI:29105"/>
    </ligand>
</feature>
<organism>
    <name type="scientific">Synechocystis sp. (strain ATCC 27184 / PCC 6803 / Kazusa)</name>
    <dbReference type="NCBI Taxonomy" id="1111708"/>
    <lineage>
        <taxon>Bacteria</taxon>
        <taxon>Bacillati</taxon>
        <taxon>Cyanobacteriota</taxon>
        <taxon>Cyanophyceae</taxon>
        <taxon>Synechococcales</taxon>
        <taxon>Merismopediaceae</taxon>
        <taxon>Synechocystis</taxon>
    </lineage>
</organism>